<organism>
    <name type="scientific">Phytolacca acinosa</name>
    <name type="common">Indian pokeweed</name>
    <name type="synonym">Phytolacca esculenta</name>
    <dbReference type="NCBI Taxonomy" id="3528"/>
    <lineage>
        <taxon>Eukaryota</taxon>
        <taxon>Viridiplantae</taxon>
        <taxon>Streptophyta</taxon>
        <taxon>Embryophyta</taxon>
        <taxon>Tracheophyta</taxon>
        <taxon>Spermatophyta</taxon>
        <taxon>Magnoliopsida</taxon>
        <taxon>eudicotyledons</taxon>
        <taxon>Gunneridae</taxon>
        <taxon>Pentapetalae</taxon>
        <taxon>Caryophyllales</taxon>
        <taxon>Phytolaccaceae</taxon>
        <taxon>Phytolacca</taxon>
    </lineage>
</organism>
<proteinExistence type="evidence at protein level"/>
<dbReference type="PIR" id="A00238">
    <property type="entry name" value="FEFW2E"/>
</dbReference>
<dbReference type="SMR" id="P00232"/>
<dbReference type="GO" id="GO:0009570">
    <property type="term" value="C:chloroplast stroma"/>
    <property type="evidence" value="ECO:0007669"/>
    <property type="project" value="TreeGrafter"/>
</dbReference>
<dbReference type="GO" id="GO:0051537">
    <property type="term" value="F:2 iron, 2 sulfur cluster binding"/>
    <property type="evidence" value="ECO:0007669"/>
    <property type="project" value="UniProtKB-KW"/>
</dbReference>
<dbReference type="GO" id="GO:0009055">
    <property type="term" value="F:electron transfer activity"/>
    <property type="evidence" value="ECO:0007669"/>
    <property type="project" value="InterPro"/>
</dbReference>
<dbReference type="GO" id="GO:0046872">
    <property type="term" value="F:metal ion binding"/>
    <property type="evidence" value="ECO:0007669"/>
    <property type="project" value="UniProtKB-KW"/>
</dbReference>
<dbReference type="GO" id="GO:0022900">
    <property type="term" value="P:electron transport chain"/>
    <property type="evidence" value="ECO:0007669"/>
    <property type="project" value="InterPro"/>
</dbReference>
<dbReference type="CDD" id="cd00207">
    <property type="entry name" value="fer2"/>
    <property type="match status" value="1"/>
</dbReference>
<dbReference type="FunFam" id="3.10.20.30:FF:000014">
    <property type="entry name" value="Ferredoxin"/>
    <property type="match status" value="1"/>
</dbReference>
<dbReference type="Gene3D" id="3.10.20.30">
    <property type="match status" value="1"/>
</dbReference>
<dbReference type="InterPro" id="IPR036010">
    <property type="entry name" value="2Fe-2S_ferredoxin-like_sf"/>
</dbReference>
<dbReference type="InterPro" id="IPR001041">
    <property type="entry name" value="2Fe-2S_ferredoxin-type"/>
</dbReference>
<dbReference type="InterPro" id="IPR006058">
    <property type="entry name" value="2Fe2S_fd_BS"/>
</dbReference>
<dbReference type="InterPro" id="IPR012675">
    <property type="entry name" value="Beta-grasp_dom_sf"/>
</dbReference>
<dbReference type="InterPro" id="IPR010241">
    <property type="entry name" value="Fd_pln"/>
</dbReference>
<dbReference type="NCBIfam" id="TIGR02008">
    <property type="entry name" value="fdx_plant"/>
    <property type="match status" value="1"/>
</dbReference>
<dbReference type="PANTHER" id="PTHR43112">
    <property type="entry name" value="FERREDOXIN"/>
    <property type="match status" value="1"/>
</dbReference>
<dbReference type="PANTHER" id="PTHR43112:SF3">
    <property type="entry name" value="FERREDOXIN-2, CHLOROPLASTIC"/>
    <property type="match status" value="1"/>
</dbReference>
<dbReference type="Pfam" id="PF00111">
    <property type="entry name" value="Fer2"/>
    <property type="match status" value="1"/>
</dbReference>
<dbReference type="SUPFAM" id="SSF54292">
    <property type="entry name" value="2Fe-2S ferredoxin-like"/>
    <property type="match status" value="1"/>
</dbReference>
<dbReference type="PROSITE" id="PS00197">
    <property type="entry name" value="2FE2S_FER_1"/>
    <property type="match status" value="1"/>
</dbReference>
<dbReference type="PROSITE" id="PS51085">
    <property type="entry name" value="2FE2S_FER_2"/>
    <property type="match status" value="1"/>
</dbReference>
<evidence type="ECO:0000255" key="1">
    <source>
        <dbReference type="PROSITE-ProRule" id="PRU00465"/>
    </source>
</evidence>
<evidence type="ECO:0000305" key="2"/>
<name>FER2_PHYAN</name>
<accession>P00232</accession>
<reference key="1">
    <citation type="journal article" date="1980" name="J. Biochem.">
        <title>Amino acid sequences of two ferredoxins from Phytolacca esculenta. Gene duplication and speciation.</title>
        <authorList>
            <person name="Wakabayashi S."/>
            <person name="Hase T."/>
            <person name="Wada K."/>
            <person name="Matsubara H."/>
            <person name="Suzuki K."/>
        </authorList>
    </citation>
    <scope>PROTEIN SEQUENCE</scope>
</reference>
<protein>
    <recommendedName>
        <fullName>Ferredoxin-2</fullName>
    </recommendedName>
    <alternativeName>
        <fullName>Ferredoxin II</fullName>
    </alternativeName>
</protein>
<sequence length="98" mass="10264">AASYKVTFVTPSGTKTITCPADTYVLDAAEDTGLDLPYSCRAGACSSCAGKVTAGSVNQEDGSFLDEEQMEAGWVLTCVAYPTSDVTIETHKEEDLSA</sequence>
<comment type="function">
    <text>Ferredoxins are iron-sulfur proteins that transfer electrons in a wide variety of metabolic reactions.</text>
</comment>
<comment type="cofactor">
    <cofactor>
        <name>[2Fe-2S] cluster</name>
        <dbReference type="ChEBI" id="CHEBI:190135"/>
    </cofactor>
    <text>Binds 1 [2Fe-2S] cluster.</text>
</comment>
<comment type="subcellular location">
    <subcellularLocation>
        <location>Plastid</location>
        <location>Chloroplast</location>
    </subcellularLocation>
</comment>
<comment type="similarity">
    <text evidence="2">Belongs to the 2Fe2S plant-type ferredoxin family.</text>
</comment>
<feature type="chain" id="PRO_0000189351" description="Ferredoxin-2">
    <location>
        <begin position="1"/>
        <end position="98"/>
    </location>
</feature>
<feature type="domain" description="2Fe-2S ferredoxin-type" evidence="1">
    <location>
        <begin position="4"/>
        <end position="94"/>
    </location>
</feature>
<feature type="binding site">
    <location>
        <position position="40"/>
    </location>
    <ligand>
        <name>[2Fe-2S] cluster</name>
        <dbReference type="ChEBI" id="CHEBI:190135"/>
    </ligand>
</feature>
<feature type="binding site">
    <location>
        <position position="45"/>
    </location>
    <ligand>
        <name>[2Fe-2S] cluster</name>
        <dbReference type="ChEBI" id="CHEBI:190135"/>
    </ligand>
</feature>
<feature type="binding site">
    <location>
        <position position="48"/>
    </location>
    <ligand>
        <name>[2Fe-2S] cluster</name>
        <dbReference type="ChEBI" id="CHEBI:190135"/>
    </ligand>
</feature>
<feature type="binding site">
    <location>
        <position position="78"/>
    </location>
    <ligand>
        <name>[2Fe-2S] cluster</name>
        <dbReference type="ChEBI" id="CHEBI:190135"/>
    </ligand>
</feature>
<keyword id="KW-0001">2Fe-2S</keyword>
<keyword id="KW-0150">Chloroplast</keyword>
<keyword id="KW-0903">Direct protein sequencing</keyword>
<keyword id="KW-0249">Electron transport</keyword>
<keyword id="KW-0408">Iron</keyword>
<keyword id="KW-0411">Iron-sulfur</keyword>
<keyword id="KW-0479">Metal-binding</keyword>
<keyword id="KW-0934">Plastid</keyword>
<keyword id="KW-0813">Transport</keyword>